<accession>P37725</accession>
<protein>
    <recommendedName>
        <fullName>Uroporphyrinogen-III C-methyltransferase</fullName>
        <shortName>Urogen III methylase</shortName>
        <ecNumber evidence="1">2.1.1.107</ecNumber>
    </recommendedName>
    <alternativeName>
        <fullName evidence="2">S-adenosyl-L-methionine:uroporphyrinogen III methyltransferase</fullName>
        <shortName evidence="2">SUMT</shortName>
    </alternativeName>
    <alternativeName>
        <fullName>Uroporphyrinogen III methylase</fullName>
        <shortName>UROM</shortName>
    </alternativeName>
</protein>
<dbReference type="EC" id="2.1.1.107" evidence="1"/>
<dbReference type="EMBL" id="AF115334">
    <property type="protein sequence ID" value="AAD45977.1"/>
    <property type="molecule type" value="Genomic_DNA"/>
</dbReference>
<dbReference type="SMR" id="P37725"/>
<dbReference type="eggNOG" id="COG0007">
    <property type="taxonomic scope" value="Bacteria"/>
</dbReference>
<dbReference type="UniPathway" id="UPA00148">
    <property type="reaction ID" value="UER00211"/>
</dbReference>
<dbReference type="UniPathway" id="UPA00262">
    <property type="reaction ID" value="UER00211"/>
</dbReference>
<dbReference type="GO" id="GO:0004851">
    <property type="term" value="F:uroporphyrin-III C-methyltransferase activity"/>
    <property type="evidence" value="ECO:0007669"/>
    <property type="project" value="UniProtKB-EC"/>
</dbReference>
<dbReference type="GO" id="GO:0009236">
    <property type="term" value="P:cobalamin biosynthetic process"/>
    <property type="evidence" value="ECO:0007669"/>
    <property type="project" value="UniProtKB-UniPathway"/>
</dbReference>
<dbReference type="GO" id="GO:0032259">
    <property type="term" value="P:methylation"/>
    <property type="evidence" value="ECO:0007669"/>
    <property type="project" value="UniProtKB-KW"/>
</dbReference>
<dbReference type="GO" id="GO:0019354">
    <property type="term" value="P:siroheme biosynthetic process"/>
    <property type="evidence" value="ECO:0007669"/>
    <property type="project" value="UniProtKB-UniPathway"/>
</dbReference>
<dbReference type="CDD" id="cd11642">
    <property type="entry name" value="SUMT"/>
    <property type="match status" value="1"/>
</dbReference>
<dbReference type="FunFam" id="3.40.1010.10:FF:000001">
    <property type="entry name" value="Siroheme synthase"/>
    <property type="match status" value="1"/>
</dbReference>
<dbReference type="Gene3D" id="3.40.1010.10">
    <property type="entry name" value="Cobalt-precorrin-4 Transmethylase, Domain 1"/>
    <property type="match status" value="1"/>
</dbReference>
<dbReference type="Gene3D" id="3.30.950.10">
    <property type="entry name" value="Methyltransferase, Cobalt-precorrin-4 Transmethylase, Domain 2"/>
    <property type="match status" value="1"/>
</dbReference>
<dbReference type="InterPro" id="IPR000878">
    <property type="entry name" value="4pyrrol_Mease"/>
</dbReference>
<dbReference type="InterPro" id="IPR035996">
    <property type="entry name" value="4pyrrol_Methylase_sf"/>
</dbReference>
<dbReference type="InterPro" id="IPR014777">
    <property type="entry name" value="4pyrrole_Mease_sub1"/>
</dbReference>
<dbReference type="InterPro" id="IPR014776">
    <property type="entry name" value="4pyrrole_Mease_sub2"/>
</dbReference>
<dbReference type="InterPro" id="IPR006366">
    <property type="entry name" value="CobA/CysG_C"/>
</dbReference>
<dbReference type="InterPro" id="IPR050161">
    <property type="entry name" value="Siro_Cobalamin_biosynth"/>
</dbReference>
<dbReference type="InterPro" id="IPR003043">
    <property type="entry name" value="Uropor_MeTrfase_CS"/>
</dbReference>
<dbReference type="NCBIfam" id="TIGR01469">
    <property type="entry name" value="cobA_cysG_Cterm"/>
    <property type="match status" value="1"/>
</dbReference>
<dbReference type="NCBIfam" id="NF004790">
    <property type="entry name" value="PRK06136.1"/>
    <property type="match status" value="1"/>
</dbReference>
<dbReference type="PANTHER" id="PTHR45790:SF3">
    <property type="entry name" value="S-ADENOSYL-L-METHIONINE-DEPENDENT UROPORPHYRINOGEN III METHYLTRANSFERASE, CHLOROPLASTIC"/>
    <property type="match status" value="1"/>
</dbReference>
<dbReference type="PANTHER" id="PTHR45790">
    <property type="entry name" value="SIROHEME SYNTHASE-RELATED"/>
    <property type="match status" value="1"/>
</dbReference>
<dbReference type="Pfam" id="PF00590">
    <property type="entry name" value="TP_methylase"/>
    <property type="match status" value="1"/>
</dbReference>
<dbReference type="SUPFAM" id="SSF53790">
    <property type="entry name" value="Tetrapyrrole methylase"/>
    <property type="match status" value="1"/>
</dbReference>
<dbReference type="PROSITE" id="PS00839">
    <property type="entry name" value="SUMT_1"/>
    <property type="match status" value="1"/>
</dbReference>
<dbReference type="PROSITE" id="PS00840">
    <property type="entry name" value="SUMT_2"/>
    <property type="match status" value="1"/>
</dbReference>
<comment type="function">
    <text evidence="1">Catalyzes the two successive C-2 and C-7 methylation reactions involved in the conversion of uroporphyrinogen III to precorrin-2 via the intermediate formation of precorrin-1. It is a step in the biosynthesis of both cobalamin (vitamin B12) and siroheme.</text>
</comment>
<comment type="catalytic activity">
    <reaction evidence="1">
        <text>uroporphyrinogen III + 2 S-adenosyl-L-methionine = precorrin-2 + 2 S-adenosyl-L-homocysteine + H(+)</text>
        <dbReference type="Rhea" id="RHEA:32459"/>
        <dbReference type="ChEBI" id="CHEBI:15378"/>
        <dbReference type="ChEBI" id="CHEBI:57308"/>
        <dbReference type="ChEBI" id="CHEBI:57856"/>
        <dbReference type="ChEBI" id="CHEBI:58827"/>
        <dbReference type="ChEBI" id="CHEBI:59789"/>
        <dbReference type="EC" id="2.1.1.107"/>
    </reaction>
    <physiologicalReaction direction="left-to-right" evidence="1">
        <dbReference type="Rhea" id="RHEA:32460"/>
    </physiologicalReaction>
</comment>
<comment type="pathway">
    <text evidence="1">Cofactor biosynthesis; adenosylcobalamin biosynthesis; precorrin-2 from uroporphyrinogen III: step 1/1.</text>
</comment>
<comment type="pathway">
    <text evidence="1">Porphyrin-containing compound metabolism; siroheme biosynthesis; precorrin-2 from uroporphyrinogen III: step 1/1.</text>
</comment>
<comment type="similarity">
    <text evidence="3">Belongs to the precorrin methyltransferase family.</text>
</comment>
<proteinExistence type="inferred from homology"/>
<organism>
    <name type="scientific">Pseudomonas fluorescens</name>
    <dbReference type="NCBI Taxonomy" id="294"/>
    <lineage>
        <taxon>Bacteria</taxon>
        <taxon>Pseudomonadati</taxon>
        <taxon>Pseudomonadota</taxon>
        <taxon>Gammaproteobacteria</taxon>
        <taxon>Pseudomonadales</taxon>
        <taxon>Pseudomonadaceae</taxon>
        <taxon>Pseudomonas</taxon>
    </lineage>
</organism>
<gene>
    <name evidence="2" type="primary">cobA</name>
</gene>
<name>SUMT_PSEFL</name>
<evidence type="ECO:0000250" key="1">
    <source>
        <dbReference type="UniProtKB" id="P21631"/>
    </source>
</evidence>
<evidence type="ECO:0000303" key="2">
    <source>
    </source>
</evidence>
<evidence type="ECO:0000305" key="3"/>
<keyword id="KW-0169">Cobalamin biosynthesis</keyword>
<keyword id="KW-0489">Methyltransferase</keyword>
<keyword id="KW-0627">Porphyrin biosynthesis</keyword>
<keyword id="KW-0949">S-adenosyl-L-methionine</keyword>
<keyword id="KW-0808">Transferase</keyword>
<feature type="chain" id="PRO_0000150373" description="Uroporphyrinogen-III C-methyltransferase">
    <location>
        <begin position="1"/>
        <end position="247"/>
    </location>
</feature>
<feature type="binding site" evidence="1">
    <location>
        <position position="12"/>
    </location>
    <ligand>
        <name>S-adenosyl-L-homocysteine</name>
        <dbReference type="ChEBI" id="CHEBI:57856"/>
    </ligand>
</feature>
<feature type="binding site" evidence="1">
    <location>
        <begin position="117"/>
        <end position="118"/>
    </location>
    <ligand>
        <name>S-adenosyl-L-homocysteine</name>
        <dbReference type="ChEBI" id="CHEBI:57856"/>
    </ligand>
</feature>
<feature type="binding site" evidence="1">
    <location>
        <position position="168"/>
    </location>
    <ligand>
        <name>S-adenosyl-L-homocysteine</name>
        <dbReference type="ChEBI" id="CHEBI:57856"/>
    </ligand>
</feature>
<feature type="binding site" evidence="1">
    <location>
        <position position="197"/>
    </location>
    <ligand>
        <name>S-adenosyl-L-homocysteine</name>
        <dbReference type="ChEBI" id="CHEBI:57856"/>
    </ligand>
</feature>
<feature type="binding site" evidence="1">
    <location>
        <position position="225"/>
    </location>
    <ligand>
        <name>S-adenosyl-L-homocysteine</name>
        <dbReference type="ChEBI" id="CHEBI:57856"/>
    </ligand>
</feature>
<sequence>MSAKVWLVGAGPGDPELLTLKAVRALHAADVVLIDDLVNPRVLEHCPDARVITVGKRGGCRSTPQDFIHRLMLAMRAKANAWCDLRAATPCIFGRGGEEALWLRERGVEVELVNGITAGLAGATNCDIPLTLRGVSRGVTLVTAHTQDDSSLNWRALAEGGTTLVVYMGVAKLEEIRQQLLEGAMAADTPVAMIENASLPQQRECRSTLAHMHTDAQVFALKSPAILVIGSVAGAGQAASITVSASA</sequence>
<reference key="1">
    <citation type="journal article" date="1994" name="Gene">
        <title>Sequence of the cobA gene encoding S-adenosyl-L-methionine: uroporhyrinogen III methyltransferase of Pseudomonas fluorescens.</title>
        <authorList>
            <person name="de Mot R."/>
            <person name="Schoofs G."/>
            <person name="Nagy I."/>
            <person name="Vanderleyden J."/>
        </authorList>
    </citation>
    <scope>NUCLEOTIDE SEQUENCE [GENOMIC DNA]</scope>
    <source>
        <strain>OE 28.3</strain>
    </source>
</reference>